<dbReference type="EMBL" id="Z72896">
    <property type="protein sequence ID" value="CAA97119.1"/>
    <property type="molecule type" value="Genomic_DNA"/>
</dbReference>
<dbReference type="EMBL" id="BK006941">
    <property type="protein sequence ID" value="DAA08205.1"/>
    <property type="molecule type" value="Genomic_DNA"/>
</dbReference>
<dbReference type="PIR" id="S64419">
    <property type="entry name" value="S64419"/>
</dbReference>
<dbReference type="RefSeq" id="NP_011626.1">
    <property type="nucleotide sequence ID" value="NM_001181240.1"/>
</dbReference>
<dbReference type="BioGRID" id="33358">
    <property type="interactions" value="96"/>
</dbReference>
<dbReference type="DIP" id="DIP-4204N"/>
<dbReference type="FunCoup" id="P53265">
    <property type="interactions" value="128"/>
</dbReference>
<dbReference type="IntAct" id="P53265">
    <property type="interactions" value="29"/>
</dbReference>
<dbReference type="STRING" id="4932.YGR111W"/>
<dbReference type="iPTMnet" id="P53265"/>
<dbReference type="PaxDb" id="4932-YGR111W"/>
<dbReference type="PeptideAtlas" id="P53265"/>
<dbReference type="EnsemblFungi" id="YGR111W_mRNA">
    <property type="protein sequence ID" value="YGR111W"/>
    <property type="gene ID" value="YGR111W"/>
</dbReference>
<dbReference type="GeneID" id="853008"/>
<dbReference type="KEGG" id="sce:YGR111W"/>
<dbReference type="AGR" id="SGD:S000003343"/>
<dbReference type="SGD" id="S000003343">
    <property type="gene designation" value="YGR111W"/>
</dbReference>
<dbReference type="VEuPathDB" id="FungiDB:YGR111W"/>
<dbReference type="eggNOG" id="ENOG502QPR6">
    <property type="taxonomic scope" value="Eukaryota"/>
</dbReference>
<dbReference type="HOGENOM" id="CLU_683473_0_0_1"/>
<dbReference type="InParanoid" id="P53265"/>
<dbReference type="OMA" id="NGYARIM"/>
<dbReference type="OrthoDB" id="2020070at2759"/>
<dbReference type="BioCyc" id="YEAST:G3O-30820-MONOMER"/>
<dbReference type="BioGRID-ORCS" id="853008">
    <property type="hits" value="0 hits in 10 CRISPR screens"/>
</dbReference>
<dbReference type="PRO" id="PR:P53265"/>
<dbReference type="Proteomes" id="UP000002311">
    <property type="component" value="Chromosome VII"/>
</dbReference>
<dbReference type="RNAct" id="P53265">
    <property type="molecule type" value="protein"/>
</dbReference>
<dbReference type="GO" id="GO:0005737">
    <property type="term" value="C:cytoplasm"/>
    <property type="evidence" value="ECO:0007005"/>
    <property type="project" value="SGD"/>
</dbReference>
<dbReference type="GO" id="GO:0005634">
    <property type="term" value="C:nucleus"/>
    <property type="evidence" value="ECO:0007005"/>
    <property type="project" value="SGD"/>
</dbReference>
<dbReference type="GO" id="GO:0008361">
    <property type="term" value="P:regulation of cell size"/>
    <property type="evidence" value="ECO:0007001"/>
    <property type="project" value="SGD"/>
</dbReference>
<dbReference type="Gene3D" id="3.40.630.30">
    <property type="match status" value="1"/>
</dbReference>
<dbReference type="InterPro" id="IPR016181">
    <property type="entry name" value="Acyl_CoA_acyltransferase"/>
</dbReference>
<dbReference type="InterPro" id="IPR055100">
    <property type="entry name" value="GNAT_LYC1-like"/>
</dbReference>
<dbReference type="InterPro" id="IPR053013">
    <property type="entry name" value="LAT"/>
</dbReference>
<dbReference type="PANTHER" id="PTHR34815">
    <property type="entry name" value="LYSINE ACETYLTRANSFERASE"/>
    <property type="match status" value="1"/>
</dbReference>
<dbReference type="PANTHER" id="PTHR34815:SF2">
    <property type="entry name" value="N-ACETYLTRANSFERASE DOMAIN-CONTAINING PROTEIN"/>
    <property type="match status" value="1"/>
</dbReference>
<dbReference type="Pfam" id="PF22998">
    <property type="entry name" value="GNAT_LYC1-like"/>
    <property type="match status" value="1"/>
</dbReference>
<dbReference type="SUPFAM" id="SSF55729">
    <property type="entry name" value="Acyl-CoA N-acyltransferases (Nat)"/>
    <property type="match status" value="1"/>
</dbReference>
<feature type="chain" id="PRO_0000202814" description="Uncharacterized protein YGR111W">
    <location>
        <begin position="1"/>
        <end position="400"/>
    </location>
</feature>
<proteinExistence type="evidence at protein level"/>
<accession>P53265</accession>
<accession>D6VUP4</accession>
<comment type="miscellaneous">
    <text evidence="1">Present with 768 molecules/cell in log phase SD medium.</text>
</comment>
<name>YG2W_YEAST</name>
<evidence type="ECO:0000269" key="1">
    <source>
    </source>
</evidence>
<organism>
    <name type="scientific">Saccharomyces cerevisiae (strain ATCC 204508 / S288c)</name>
    <name type="common">Baker's yeast</name>
    <dbReference type="NCBI Taxonomy" id="559292"/>
    <lineage>
        <taxon>Eukaryota</taxon>
        <taxon>Fungi</taxon>
        <taxon>Dikarya</taxon>
        <taxon>Ascomycota</taxon>
        <taxon>Saccharomycotina</taxon>
        <taxon>Saccharomycetes</taxon>
        <taxon>Saccharomycetales</taxon>
        <taxon>Saccharomycetaceae</taxon>
        <taxon>Saccharomyces</taxon>
    </lineage>
</organism>
<keyword id="KW-1185">Reference proteome</keyword>
<sequence>MTASSNDDDLIFECYSDPELKRWTHLANAKAWKGILTVQQYADREQLLGSSEISQKNKSNEMMTKYPKSYQWLGQKYFVLKDRSLPDNGKFSQVVSSCETLNRIGYCIHPGSNGKIEPALIVCIGGVFTFENHRGKGYAKKMIIKLNEFYDKIRDDANTVLELKNLVINLYSEVGEYYSALGYESMHVPLHRISKLDELTERYCGEDDDHDGKYLGFDDYRGLVGLHETQFKESLLSLHKENPEKFVFTVAPDFDIFTWFQYRDLFIMNKSGRKAQQNLFFGYALSDNSHIIWHHNWNGDSLIIVKIHIPEETFQRKELKLKKLLRKAIEETKLHGLQELEFWDEEIPIKKYPQLFQLLTELENESKVFSENGSISAVRPPKGYTAEQVIWDNNTKFCWF</sequence>
<gene>
    <name type="ordered locus">YGR111W</name>
    <name type="ORF">G6145</name>
</gene>
<protein>
    <recommendedName>
        <fullName>Uncharacterized protein YGR111W</fullName>
    </recommendedName>
</protein>
<reference key="1">
    <citation type="journal article" date="1996" name="Yeast">
        <title>The sequence of a 23.4 kb segment on the right arm of chromosome VII from Saccharomyces cerevisiae reveals CLB6, SPT6, RP28A and NUP57 genes, a Ty3 element and 11 new open reading frames.</title>
        <authorList>
            <person name="Hansen M."/>
            <person name="Albers M."/>
            <person name="Backes U."/>
            <person name="Coblenz A."/>
            <person name="Leuther H."/>
            <person name="Neu R."/>
            <person name="Schreer A."/>
            <person name="Schaefer B."/>
            <person name="Zimmermann M."/>
            <person name="Wolf K."/>
        </authorList>
    </citation>
    <scope>NUCLEOTIDE SEQUENCE [GENOMIC DNA]</scope>
</reference>
<reference key="2">
    <citation type="journal article" date="1997" name="Nature">
        <title>The nucleotide sequence of Saccharomyces cerevisiae chromosome VII.</title>
        <authorList>
            <person name="Tettelin H."/>
            <person name="Agostoni-Carbone M.L."/>
            <person name="Albermann K."/>
            <person name="Albers M."/>
            <person name="Arroyo J."/>
            <person name="Backes U."/>
            <person name="Barreiros T."/>
            <person name="Bertani I."/>
            <person name="Bjourson A.J."/>
            <person name="Brueckner M."/>
            <person name="Bruschi C.V."/>
            <person name="Carignani G."/>
            <person name="Castagnoli L."/>
            <person name="Cerdan E."/>
            <person name="Clemente M.L."/>
            <person name="Coblenz A."/>
            <person name="Coglievina M."/>
            <person name="Coissac E."/>
            <person name="Defoor E."/>
            <person name="Del Bino S."/>
            <person name="Delius H."/>
            <person name="Delneri D."/>
            <person name="de Wergifosse P."/>
            <person name="Dujon B."/>
            <person name="Durand P."/>
            <person name="Entian K.-D."/>
            <person name="Eraso P."/>
            <person name="Escribano V."/>
            <person name="Fabiani L."/>
            <person name="Fartmann B."/>
            <person name="Feroli F."/>
            <person name="Feuermann M."/>
            <person name="Frontali L."/>
            <person name="Garcia-Gonzalez M."/>
            <person name="Garcia-Saez M.I."/>
            <person name="Goffeau A."/>
            <person name="Guerreiro P."/>
            <person name="Hani J."/>
            <person name="Hansen M."/>
            <person name="Hebling U."/>
            <person name="Hernandez K."/>
            <person name="Heumann K."/>
            <person name="Hilger F."/>
            <person name="Hofmann B."/>
            <person name="Indge K.J."/>
            <person name="James C.M."/>
            <person name="Klima R."/>
            <person name="Koetter P."/>
            <person name="Kramer B."/>
            <person name="Kramer W."/>
            <person name="Lauquin G."/>
            <person name="Leuther H."/>
            <person name="Louis E.J."/>
            <person name="Maillier E."/>
            <person name="Marconi A."/>
            <person name="Martegani E."/>
            <person name="Mazon M.J."/>
            <person name="Mazzoni C."/>
            <person name="McReynolds A.D.K."/>
            <person name="Melchioretto P."/>
            <person name="Mewes H.-W."/>
            <person name="Minenkova O."/>
            <person name="Mueller-Auer S."/>
            <person name="Nawrocki A."/>
            <person name="Netter P."/>
            <person name="Neu R."/>
            <person name="Nombela C."/>
            <person name="Oliver S.G."/>
            <person name="Panzeri L."/>
            <person name="Paoluzi S."/>
            <person name="Plevani P."/>
            <person name="Portetelle D."/>
            <person name="Portillo F."/>
            <person name="Potier S."/>
            <person name="Purnelle B."/>
            <person name="Rieger M."/>
            <person name="Riles L."/>
            <person name="Rinaldi T."/>
            <person name="Robben J."/>
            <person name="Rodrigues-Pousada C."/>
            <person name="Rodriguez-Belmonte E."/>
            <person name="Rodriguez-Torres A.M."/>
            <person name="Rose M."/>
            <person name="Ruzzi M."/>
            <person name="Saliola M."/>
            <person name="Sanchez-Perez M."/>
            <person name="Schaefer B."/>
            <person name="Schaefer M."/>
            <person name="Scharfe M."/>
            <person name="Schmidheini T."/>
            <person name="Schreer A."/>
            <person name="Skala J."/>
            <person name="Souciet J.-L."/>
            <person name="Steensma H.Y."/>
            <person name="Talla E."/>
            <person name="Thierry A."/>
            <person name="Vandenbol M."/>
            <person name="van der Aart Q.J.M."/>
            <person name="Van Dyck L."/>
            <person name="Vanoni M."/>
            <person name="Verhasselt P."/>
            <person name="Voet M."/>
            <person name="Volckaert G."/>
            <person name="Wambutt R."/>
            <person name="Watson M.D."/>
            <person name="Weber N."/>
            <person name="Wedler E."/>
            <person name="Wedler H."/>
            <person name="Wipfli P."/>
            <person name="Wolf K."/>
            <person name="Wright L.F."/>
            <person name="Zaccaria P."/>
            <person name="Zimmermann M."/>
            <person name="Zollner A."/>
            <person name="Kleine K."/>
        </authorList>
    </citation>
    <scope>NUCLEOTIDE SEQUENCE [LARGE SCALE GENOMIC DNA]</scope>
    <source>
        <strain>ATCC 204508 / S288c</strain>
    </source>
</reference>
<reference key="3">
    <citation type="journal article" date="2014" name="G3 (Bethesda)">
        <title>The reference genome sequence of Saccharomyces cerevisiae: Then and now.</title>
        <authorList>
            <person name="Engel S.R."/>
            <person name="Dietrich F.S."/>
            <person name="Fisk D.G."/>
            <person name="Binkley G."/>
            <person name="Balakrishnan R."/>
            <person name="Costanzo M.C."/>
            <person name="Dwight S.S."/>
            <person name="Hitz B.C."/>
            <person name="Karra K."/>
            <person name="Nash R.S."/>
            <person name="Weng S."/>
            <person name="Wong E.D."/>
            <person name="Lloyd P."/>
            <person name="Skrzypek M.S."/>
            <person name="Miyasato S.R."/>
            <person name="Simison M."/>
            <person name="Cherry J.M."/>
        </authorList>
    </citation>
    <scope>GENOME REANNOTATION</scope>
    <source>
        <strain>ATCC 204508 / S288c</strain>
    </source>
</reference>
<reference key="4">
    <citation type="journal article" date="2003" name="Nature">
        <title>Global analysis of protein expression in yeast.</title>
        <authorList>
            <person name="Ghaemmaghami S."/>
            <person name="Huh W.-K."/>
            <person name="Bower K."/>
            <person name="Howson R.W."/>
            <person name="Belle A."/>
            <person name="Dephoure N."/>
            <person name="O'Shea E.K."/>
            <person name="Weissman J.S."/>
        </authorList>
    </citation>
    <scope>LEVEL OF PROTEIN EXPRESSION [LARGE SCALE ANALYSIS]</scope>
</reference>